<organism>
    <name type="scientific">Saccharomyces cerevisiae (strain ATCC 204508 / S288c)</name>
    <name type="common">Baker's yeast</name>
    <dbReference type="NCBI Taxonomy" id="559292"/>
    <lineage>
        <taxon>Eukaryota</taxon>
        <taxon>Fungi</taxon>
        <taxon>Dikarya</taxon>
        <taxon>Ascomycota</taxon>
        <taxon>Saccharomycotina</taxon>
        <taxon>Saccharomycetes</taxon>
        <taxon>Saccharomycetales</taxon>
        <taxon>Saccharomycetaceae</taxon>
        <taxon>Saccharomyces</taxon>
    </lineage>
</organism>
<accession>P40211</accession>
<accession>A0A1S0T0A5</accession>
<gene>
    <name type="ordered locus">YMR141C</name>
    <name type="ORF">YM9375.10C</name>
</gene>
<proteinExistence type="predicted"/>
<protein>
    <recommendedName>
        <fullName>Uncharacterized protein YMR141C</fullName>
    </recommendedName>
</protein>
<reference key="1">
    <citation type="journal article" date="1997" name="Nature">
        <title>The nucleotide sequence of Saccharomyces cerevisiae chromosome XIII.</title>
        <authorList>
            <person name="Bowman S."/>
            <person name="Churcher C.M."/>
            <person name="Badcock K."/>
            <person name="Brown D."/>
            <person name="Chillingworth T."/>
            <person name="Connor R."/>
            <person name="Dedman K."/>
            <person name="Devlin K."/>
            <person name="Gentles S."/>
            <person name="Hamlin N."/>
            <person name="Hunt S."/>
            <person name="Jagels K."/>
            <person name="Lye G."/>
            <person name="Moule S."/>
            <person name="Odell C."/>
            <person name="Pearson D."/>
            <person name="Rajandream M.A."/>
            <person name="Rice P."/>
            <person name="Skelton J."/>
            <person name="Walsh S.V."/>
            <person name="Whitehead S."/>
            <person name="Barrell B.G."/>
        </authorList>
    </citation>
    <scope>NUCLEOTIDE SEQUENCE [LARGE SCALE GENOMIC DNA]</scope>
    <source>
        <strain>ATCC 204508 / S288c</strain>
    </source>
</reference>
<reference key="2">
    <citation type="journal article" date="2014" name="G3 (Bethesda)">
        <title>The reference genome sequence of Saccharomyces cerevisiae: Then and now.</title>
        <authorList>
            <person name="Engel S.R."/>
            <person name="Dietrich F.S."/>
            <person name="Fisk D.G."/>
            <person name="Binkley G."/>
            <person name="Balakrishnan R."/>
            <person name="Costanzo M.C."/>
            <person name="Dwight S.S."/>
            <person name="Hitz B.C."/>
            <person name="Karra K."/>
            <person name="Nash R.S."/>
            <person name="Weng S."/>
            <person name="Wong E.D."/>
            <person name="Lloyd P."/>
            <person name="Skrzypek M.S."/>
            <person name="Miyasato S.R."/>
            <person name="Simison M."/>
            <person name="Cherry J.M."/>
        </authorList>
    </citation>
    <scope>GENOME REANNOTATION</scope>
    <source>
        <strain>ATCC 204508 / S288c</strain>
    </source>
</reference>
<reference key="3">
    <citation type="journal article" date="2007" name="Genome Res.">
        <title>Approaching a complete repository of sequence-verified protein-encoding clones for Saccharomyces cerevisiae.</title>
        <authorList>
            <person name="Hu Y."/>
            <person name="Rolfs A."/>
            <person name="Bhullar B."/>
            <person name="Murthy T.V.S."/>
            <person name="Zhu C."/>
            <person name="Berger M.F."/>
            <person name="Camargo A.A."/>
            <person name="Kelley F."/>
            <person name="McCarron S."/>
            <person name="Jepson D."/>
            <person name="Richardson A."/>
            <person name="Raphael J."/>
            <person name="Moreira D."/>
            <person name="Taycher E."/>
            <person name="Zuo D."/>
            <person name="Mohr S."/>
            <person name="Kane M.F."/>
            <person name="Williamson J."/>
            <person name="Simpson A.J.G."/>
            <person name="Bulyk M.L."/>
            <person name="Harlow E."/>
            <person name="Marsischky G."/>
            <person name="Kolodner R.D."/>
            <person name="LaBaer J."/>
        </authorList>
    </citation>
    <scope>NUCLEOTIDE SEQUENCE [GENOMIC DNA]</scope>
    <source>
        <strain>ATCC 204508 / S288c</strain>
    </source>
</reference>
<keyword id="KW-1185">Reference proteome</keyword>
<feature type="chain" id="PRO_0000203304" description="Uncharacterized protein YMR141C">
    <location>
        <begin position="1"/>
        <end position="102"/>
    </location>
</feature>
<sequence length="102" mass="12108">MSRTDTSEKRKEDFIYVSLNIYLCVRLYIMHLISSNTPKSHCSVRFLCFFLSALAITSNRNFFRPEKMPTRIFCNDTLMVSPKTEKFLERFTNQKLAKLEVR</sequence>
<name>YM21_YEAST</name>
<dbReference type="EMBL" id="Z47071">
    <property type="protein sequence ID" value="CAA87355.1"/>
    <property type="molecule type" value="Genomic_DNA"/>
</dbReference>
<dbReference type="EMBL" id="AY558412">
    <property type="protein sequence ID" value="AAS56738.1"/>
    <property type="molecule type" value="Genomic_DNA"/>
</dbReference>
<dbReference type="EMBL" id="BK006946">
    <property type="protein sequence ID" value="DAA80328.1"/>
    <property type="molecule type" value="Genomic_DNA"/>
</dbReference>
<dbReference type="PIR" id="S50397">
    <property type="entry name" value="S50397"/>
</dbReference>
<dbReference type="RefSeq" id="NP_001335808.1">
    <property type="nucleotide sequence ID" value="NM_001348868.1"/>
</dbReference>
<dbReference type="SMR" id="P40211"/>
<dbReference type="DIP" id="DIP-4695N"/>
<dbReference type="FunCoup" id="P40211">
    <property type="interactions" value="28"/>
</dbReference>
<dbReference type="IntAct" id="P40211">
    <property type="interactions" value="1"/>
</dbReference>
<dbReference type="PaxDb" id="4932-YMR141C"/>
<dbReference type="EnsemblFungi" id="YMR141C_mRNA">
    <property type="protein sequence ID" value="YMR141C"/>
    <property type="gene ID" value="YMR141C"/>
</dbReference>
<dbReference type="GeneID" id="855172"/>
<dbReference type="AGR" id="SGD:S000004749"/>
<dbReference type="SGD" id="S000004749">
    <property type="gene designation" value="YMR141C"/>
</dbReference>
<dbReference type="HOGENOM" id="CLU_2279642_0_0_1"/>
<dbReference type="InParanoid" id="P40211"/>
<dbReference type="PRO" id="PR:P40211"/>
<dbReference type="Proteomes" id="UP000002311">
    <property type="component" value="Chromosome XIII"/>
</dbReference>
<dbReference type="RNAct" id="P40211">
    <property type="molecule type" value="protein"/>
</dbReference>